<comment type="function">
    <text evidence="2 3 4 5">Part of the bacABCDEF operon responsible for the biosynthesis of the nonribosomally synthesized dipeptide antibiotic bacilysin, composed of L-alanine and L-anticapsin. Bacilysin is an irreversible inactivator of the glutaminase domain of glucosamine synthetase (PubMed:15609023, PubMed:20052993). BacA is an unusual prephenate decarboxylase that avoids the typical aromatization of the cyclohexadienol ring of prephenate (PubMed:20052993, PubMed:22483065). BacA catalyzes the protonation of prephenate (1-carboxy-4-hydroxy-alpha-oxo-2,5-cyclohexadiene-1-propanoic acid) at C6 position, followed by a decarboxylation to produce the endocyclic-delta(4),delta(8)-7R-dihydro-hydroxyphenylpyruvate (en-H2HPP) (PubMed:20052993, PubMed:22483065, PubMed:22765234). En-H2HPP is able to undergo a slow nonenzymatic isomerization to produce the exocyclic-delta(3),delta(5)-dihydro-hydroxyphenylpyruvate (ex-H2HPP) (PubMed:20052993, PubMed:22483065). BacA isomerizes only the pro-R double bond in prephenate (PubMed:22483065).</text>
</comment>
<comment type="catalytic activity">
    <reaction evidence="3 4">
        <text>prephenate + H(+) = 3-[(4R)-4-hydroxycyclohexa-1,5-dien-1-yl]-2-oxopropanoate + CO2</text>
        <dbReference type="Rhea" id="RHEA:33499"/>
        <dbReference type="ChEBI" id="CHEBI:15378"/>
        <dbReference type="ChEBI" id="CHEBI:16526"/>
        <dbReference type="ChEBI" id="CHEBI:29934"/>
        <dbReference type="ChEBI" id="CHEBI:84354"/>
        <dbReference type="EC" id="4.1.1.100"/>
    </reaction>
</comment>
<comment type="biophysicochemical properties">
    <kinetics>
        <KM evidence="3">70 uM for prephenate</KM>
        <text evidence="3">kcat is 190 min(-1) for decarboxylase activity with prephenate as substrate.</text>
    </kinetics>
</comment>
<comment type="pathway">
    <text evidence="5 9">Antibiotic biosynthesis; bacilysin biosynthesis.</text>
</comment>
<comment type="subcellular location">
    <subcellularLocation>
        <location evidence="8">Cytoplasm</location>
    </subcellularLocation>
</comment>
<comment type="induction">
    <text evidence="1">The compound guanosine 5'-diphosphate 3'-diphosphate (ppGpp) is essential for the transcription of the bacABCDEF operon and BacG, and GTP regulates the transcription of both this operon and ywfH via the CodY-mediated regulation system.</text>
</comment>
<comment type="similarity">
    <text evidence="8">Belongs to the prephenate decarboxylase family.</text>
</comment>
<dbReference type="EC" id="4.1.1.100" evidence="3 4"/>
<dbReference type="EMBL" id="X73124">
    <property type="protein sequence ID" value="CAA51636.1"/>
    <property type="molecule type" value="Genomic_DNA"/>
</dbReference>
<dbReference type="EMBL" id="AL009126">
    <property type="protein sequence ID" value="CAB15801.1"/>
    <property type="molecule type" value="Genomic_DNA"/>
</dbReference>
<dbReference type="PIR" id="S39735">
    <property type="entry name" value="S39735"/>
</dbReference>
<dbReference type="RefSeq" id="NP_391654.1">
    <property type="nucleotide sequence ID" value="NC_000964.3"/>
</dbReference>
<dbReference type="RefSeq" id="WP_009968341.1">
    <property type="nucleotide sequence ID" value="NZ_OZ025638.1"/>
</dbReference>
<dbReference type="SMR" id="P39638"/>
<dbReference type="FunCoup" id="P39638">
    <property type="interactions" value="12"/>
</dbReference>
<dbReference type="STRING" id="224308.BSU37740"/>
<dbReference type="PaxDb" id="224308-BSU37740"/>
<dbReference type="EnsemblBacteria" id="CAB15801">
    <property type="protein sequence ID" value="CAB15801"/>
    <property type="gene ID" value="BSU_37740"/>
</dbReference>
<dbReference type="GeneID" id="937216"/>
<dbReference type="KEGG" id="bsu:BSU37740"/>
<dbReference type="PATRIC" id="fig|224308.179.peg.4086"/>
<dbReference type="eggNOG" id="COG0077">
    <property type="taxonomic scope" value="Bacteria"/>
</dbReference>
<dbReference type="InParanoid" id="P39638"/>
<dbReference type="OrthoDB" id="490158at2"/>
<dbReference type="BioCyc" id="BSUB:BSU37740-MONOMER"/>
<dbReference type="BioCyc" id="MetaCyc:MONOMER-19126"/>
<dbReference type="BRENDA" id="4.1.1.100">
    <property type="organism ID" value="658"/>
</dbReference>
<dbReference type="UniPathway" id="UPA00100"/>
<dbReference type="Proteomes" id="UP000001570">
    <property type="component" value="Chromosome"/>
</dbReference>
<dbReference type="GO" id="GO:0005737">
    <property type="term" value="C:cytoplasm"/>
    <property type="evidence" value="ECO:0007669"/>
    <property type="project" value="UniProtKB-SubCell"/>
</dbReference>
<dbReference type="GO" id="GO:0016831">
    <property type="term" value="F:carboxy-lyase activity"/>
    <property type="evidence" value="ECO:0000314"/>
    <property type="project" value="UniProtKB"/>
</dbReference>
<dbReference type="GO" id="GO:0017000">
    <property type="term" value="P:antibiotic biosynthetic process"/>
    <property type="evidence" value="ECO:0000314"/>
    <property type="project" value="UniProtKB"/>
</dbReference>
<dbReference type="Gene3D" id="3.40.190.10">
    <property type="entry name" value="Periplasmic binding protein-like II"/>
    <property type="match status" value="1"/>
</dbReference>
<dbReference type="SUPFAM" id="SSF53850">
    <property type="entry name" value="Periplasmic binding protein-like II"/>
    <property type="match status" value="1"/>
</dbReference>
<sequence>MIILDNSIQTKKRTDSLSKLITVNTLGPEGTSSEYAAKHFISNFTLLQGLNSKLSLHDTFESCIERTLQSPLEYTIVPHAYDGIKHFYMRPDLQLLQIFRCDTPMYGLAVRPDFEFRDDMLDTSVIVSHPSPINLIKYFTRKDVRFKLVNSTSQAARKVKEGLYDIALTNELARQKYGLTFVKTFKSIPMSWSLFGKGDVDDEN</sequence>
<evidence type="ECO:0000269" key="1">
    <source>
    </source>
</evidence>
<evidence type="ECO:0000269" key="2">
    <source>
    </source>
</evidence>
<evidence type="ECO:0000269" key="3">
    <source>
    </source>
</evidence>
<evidence type="ECO:0000269" key="4">
    <source>
    </source>
</evidence>
<evidence type="ECO:0000269" key="5">
    <source>
    </source>
</evidence>
<evidence type="ECO:0000303" key="6">
    <source>
    </source>
</evidence>
<evidence type="ECO:0000303" key="7">
    <source>
    </source>
</evidence>
<evidence type="ECO:0000305" key="8"/>
<evidence type="ECO:0000305" key="9">
    <source>
    </source>
</evidence>
<accession>P39638</accession>
<name>BACA_BACSU</name>
<gene>
    <name evidence="6" type="primary">bacA</name>
    <name evidence="6" type="synonym">ywfB</name>
    <name type="ordered locus">BSU37740</name>
    <name type="ORF">ipa-80d</name>
</gene>
<keyword id="KW-0045">Antibiotic biosynthesis</keyword>
<keyword id="KW-0963">Cytoplasm</keyword>
<keyword id="KW-0456">Lyase</keyword>
<keyword id="KW-1185">Reference proteome</keyword>
<feature type="chain" id="PRO_0000064797" description="Prephenate decarboxylase">
    <location>
        <begin position="1"/>
        <end position="204"/>
    </location>
</feature>
<protein>
    <recommendedName>
        <fullName evidence="7">Prephenate decarboxylase</fullName>
        <ecNumber evidence="3 4">4.1.1.100</ecNumber>
    </recommendedName>
    <alternativeName>
        <fullName evidence="6">Bacilysin biosynthesis protein BacA</fullName>
    </alternativeName>
    <alternativeName>
        <fullName evidence="7">Non-aromatizing prephenate decarboxylase</fullName>
    </alternativeName>
</protein>
<reference key="1">
    <citation type="journal article" date="1993" name="Mol. Microbiol.">
        <title>Bacillus subtilis genome project: cloning and sequencing of the 97 kb region from 325 degrees to 333 degrees.</title>
        <authorList>
            <person name="Glaser P."/>
            <person name="Kunst F."/>
            <person name="Arnaud M."/>
            <person name="Coudart M.P."/>
            <person name="Gonzales W."/>
            <person name="Hullo M.-F."/>
            <person name="Ionescu M."/>
            <person name="Lubochinsky B."/>
            <person name="Marcelino L."/>
            <person name="Moszer I."/>
            <person name="Presecan E."/>
            <person name="Santana M."/>
            <person name="Schneider E."/>
            <person name="Schweizer J."/>
            <person name="Vertes A."/>
            <person name="Rapoport G."/>
            <person name="Danchin A."/>
        </authorList>
    </citation>
    <scope>NUCLEOTIDE SEQUENCE [GENOMIC DNA]</scope>
    <source>
        <strain>168</strain>
    </source>
</reference>
<reference key="2">
    <citation type="journal article" date="1997" name="Nature">
        <title>The complete genome sequence of the Gram-positive bacterium Bacillus subtilis.</title>
        <authorList>
            <person name="Kunst F."/>
            <person name="Ogasawara N."/>
            <person name="Moszer I."/>
            <person name="Albertini A.M."/>
            <person name="Alloni G."/>
            <person name="Azevedo V."/>
            <person name="Bertero M.G."/>
            <person name="Bessieres P."/>
            <person name="Bolotin A."/>
            <person name="Borchert S."/>
            <person name="Borriss R."/>
            <person name="Boursier L."/>
            <person name="Brans A."/>
            <person name="Braun M."/>
            <person name="Brignell S.C."/>
            <person name="Bron S."/>
            <person name="Brouillet S."/>
            <person name="Bruschi C.V."/>
            <person name="Caldwell B."/>
            <person name="Capuano V."/>
            <person name="Carter N.M."/>
            <person name="Choi S.-K."/>
            <person name="Codani J.-J."/>
            <person name="Connerton I.F."/>
            <person name="Cummings N.J."/>
            <person name="Daniel R.A."/>
            <person name="Denizot F."/>
            <person name="Devine K.M."/>
            <person name="Duesterhoeft A."/>
            <person name="Ehrlich S.D."/>
            <person name="Emmerson P.T."/>
            <person name="Entian K.-D."/>
            <person name="Errington J."/>
            <person name="Fabret C."/>
            <person name="Ferrari E."/>
            <person name="Foulger D."/>
            <person name="Fritz C."/>
            <person name="Fujita M."/>
            <person name="Fujita Y."/>
            <person name="Fuma S."/>
            <person name="Galizzi A."/>
            <person name="Galleron N."/>
            <person name="Ghim S.-Y."/>
            <person name="Glaser P."/>
            <person name="Goffeau A."/>
            <person name="Golightly E.J."/>
            <person name="Grandi G."/>
            <person name="Guiseppi G."/>
            <person name="Guy B.J."/>
            <person name="Haga K."/>
            <person name="Haiech J."/>
            <person name="Harwood C.R."/>
            <person name="Henaut A."/>
            <person name="Hilbert H."/>
            <person name="Holsappel S."/>
            <person name="Hosono S."/>
            <person name="Hullo M.-F."/>
            <person name="Itaya M."/>
            <person name="Jones L.-M."/>
            <person name="Joris B."/>
            <person name="Karamata D."/>
            <person name="Kasahara Y."/>
            <person name="Klaerr-Blanchard M."/>
            <person name="Klein C."/>
            <person name="Kobayashi Y."/>
            <person name="Koetter P."/>
            <person name="Koningstein G."/>
            <person name="Krogh S."/>
            <person name="Kumano M."/>
            <person name="Kurita K."/>
            <person name="Lapidus A."/>
            <person name="Lardinois S."/>
            <person name="Lauber J."/>
            <person name="Lazarevic V."/>
            <person name="Lee S.-M."/>
            <person name="Levine A."/>
            <person name="Liu H."/>
            <person name="Masuda S."/>
            <person name="Mauel C."/>
            <person name="Medigue C."/>
            <person name="Medina N."/>
            <person name="Mellado R.P."/>
            <person name="Mizuno M."/>
            <person name="Moestl D."/>
            <person name="Nakai S."/>
            <person name="Noback M."/>
            <person name="Noone D."/>
            <person name="O'Reilly M."/>
            <person name="Ogawa K."/>
            <person name="Ogiwara A."/>
            <person name="Oudega B."/>
            <person name="Park S.-H."/>
            <person name="Parro V."/>
            <person name="Pohl T.M."/>
            <person name="Portetelle D."/>
            <person name="Porwollik S."/>
            <person name="Prescott A.M."/>
            <person name="Presecan E."/>
            <person name="Pujic P."/>
            <person name="Purnelle B."/>
            <person name="Rapoport G."/>
            <person name="Rey M."/>
            <person name="Reynolds S."/>
            <person name="Rieger M."/>
            <person name="Rivolta C."/>
            <person name="Rocha E."/>
            <person name="Roche B."/>
            <person name="Rose M."/>
            <person name="Sadaie Y."/>
            <person name="Sato T."/>
            <person name="Scanlan E."/>
            <person name="Schleich S."/>
            <person name="Schroeter R."/>
            <person name="Scoffone F."/>
            <person name="Sekiguchi J."/>
            <person name="Sekowska A."/>
            <person name="Seror S.J."/>
            <person name="Serror P."/>
            <person name="Shin B.-S."/>
            <person name="Soldo B."/>
            <person name="Sorokin A."/>
            <person name="Tacconi E."/>
            <person name="Takagi T."/>
            <person name="Takahashi H."/>
            <person name="Takemaru K."/>
            <person name="Takeuchi M."/>
            <person name="Tamakoshi A."/>
            <person name="Tanaka T."/>
            <person name="Terpstra P."/>
            <person name="Tognoni A."/>
            <person name="Tosato V."/>
            <person name="Uchiyama S."/>
            <person name="Vandenbol M."/>
            <person name="Vannier F."/>
            <person name="Vassarotti A."/>
            <person name="Viari A."/>
            <person name="Wambutt R."/>
            <person name="Wedler E."/>
            <person name="Wedler H."/>
            <person name="Weitzenegger T."/>
            <person name="Winters P."/>
            <person name="Wipat A."/>
            <person name="Yamamoto H."/>
            <person name="Yamane K."/>
            <person name="Yasumoto K."/>
            <person name="Yata K."/>
            <person name="Yoshida K."/>
            <person name="Yoshikawa H.-F."/>
            <person name="Zumstein E."/>
            <person name="Yoshikawa H."/>
            <person name="Danchin A."/>
        </authorList>
    </citation>
    <scope>NUCLEOTIDE SEQUENCE [LARGE SCALE GENOMIC DNA]</scope>
    <source>
        <strain>168</strain>
    </source>
</reference>
<reference key="3">
    <citation type="journal article" date="2003" name="J. Biol. Chem.">
        <title>Guanine nucleotides guanosine 5'-diphosphate 3'-diphosphate and GTP co-operatively regulate the production of an antibiotic bacilysin in Bacillus subtilis.</title>
        <authorList>
            <person name="Inaoka T."/>
            <person name="Takahashi K."/>
            <person name="Ohnishi-Kameyama M."/>
            <person name="Yoshida M."/>
            <person name="Ochi K."/>
        </authorList>
    </citation>
    <scope>INDUCTION</scope>
    <scope>PATHWAY</scope>
    <source>
        <strain>168 / 61884</strain>
    </source>
</reference>
<reference key="4">
    <citation type="journal article" date="2005" name="Arch. Microbiol.">
        <title>bac genes for recombinant bacilysin and anticapsin production in Bacillus host strains.</title>
        <authorList>
            <person name="Steinborn G."/>
            <person name="Hajirezaei M.-R."/>
            <person name="Hofemeister J."/>
        </authorList>
    </citation>
    <scope>FUNCTION IN BACILYSIN PRODUCTION</scope>
    <scope>GENE NAME</scope>
</reference>
<reference key="5">
    <citation type="journal article" date="2010" name="Biochemistry">
        <title>Investigation of anticapsin biosynthesis reveals a four-enzyme pathway to tetrahydrotyrosine in Bacillus subtilis.</title>
        <authorList>
            <person name="Mahlstedt S.A."/>
            <person name="Walsh C.T."/>
        </authorList>
    </citation>
    <scope>FUNCTION</scope>
    <scope>CATALYTIC ACTIVITY</scope>
    <scope>BIOPHYSICOCHEMICAL PROPERTIES</scope>
    <scope>SUBSTRATE SPECIFICITY</scope>
    <scope>REACTION MECHANISM</scope>
    <source>
        <strain>168</strain>
    </source>
</reference>
<reference key="6">
    <citation type="journal article" date="2012" name="Biochemistry">
        <title>Olefin isomerization regiochemistries during tandem action of BacA and BacB on prephenate in bacilysin biosynthesis.</title>
        <authorList>
            <person name="Parker J.B."/>
            <person name="Walsh C.T."/>
        </authorList>
    </citation>
    <scope>FUNCTION</scope>
    <scope>CATALYTIC ACTIVITY</scope>
    <scope>SUBSTRATE SPECIFICITY</scope>
    <source>
        <strain>168</strain>
    </source>
</reference>
<reference key="7">
    <citation type="journal article" date="2012" name="Biochemistry">
        <title>Stereochemical outcome at four stereogenic centers during conversion of prephenate to tetrahydrotyrosine by BacABGF in the bacilysin pathway.</title>
        <authorList>
            <person name="Parker J.B."/>
            <person name="Walsh C.T."/>
        </authorList>
    </citation>
    <scope>FUNCTION</scope>
    <scope>PATHWAY</scope>
</reference>
<organism>
    <name type="scientific">Bacillus subtilis (strain 168)</name>
    <dbReference type="NCBI Taxonomy" id="224308"/>
    <lineage>
        <taxon>Bacteria</taxon>
        <taxon>Bacillati</taxon>
        <taxon>Bacillota</taxon>
        <taxon>Bacilli</taxon>
        <taxon>Bacillales</taxon>
        <taxon>Bacillaceae</taxon>
        <taxon>Bacillus</taxon>
    </lineage>
</organism>
<proteinExistence type="evidence at protein level"/>